<evidence type="ECO:0000255" key="1">
    <source>
        <dbReference type="HAMAP-Rule" id="MF_00040"/>
    </source>
</evidence>
<accession>Q2IW83</accession>
<proteinExistence type="inferred from homology"/>
<protein>
    <recommendedName>
        <fullName evidence="1">Ribosome-recycling factor</fullName>
        <shortName evidence="1">RRF</shortName>
    </recommendedName>
    <alternativeName>
        <fullName evidence="1">Ribosome-releasing factor</fullName>
    </alternativeName>
</protein>
<dbReference type="EMBL" id="CP000250">
    <property type="protein sequence ID" value="ABD07527.1"/>
    <property type="molecule type" value="Genomic_DNA"/>
</dbReference>
<dbReference type="RefSeq" id="WP_011441712.1">
    <property type="nucleotide sequence ID" value="NC_007778.1"/>
</dbReference>
<dbReference type="SMR" id="Q2IW83"/>
<dbReference type="STRING" id="316058.RPB_2825"/>
<dbReference type="KEGG" id="rpb:RPB_2825"/>
<dbReference type="eggNOG" id="COG0233">
    <property type="taxonomic scope" value="Bacteria"/>
</dbReference>
<dbReference type="HOGENOM" id="CLU_073981_2_0_5"/>
<dbReference type="OrthoDB" id="9804006at2"/>
<dbReference type="Proteomes" id="UP000008809">
    <property type="component" value="Chromosome"/>
</dbReference>
<dbReference type="GO" id="GO:0005829">
    <property type="term" value="C:cytosol"/>
    <property type="evidence" value="ECO:0007669"/>
    <property type="project" value="GOC"/>
</dbReference>
<dbReference type="GO" id="GO:0043023">
    <property type="term" value="F:ribosomal large subunit binding"/>
    <property type="evidence" value="ECO:0007669"/>
    <property type="project" value="TreeGrafter"/>
</dbReference>
<dbReference type="GO" id="GO:0002184">
    <property type="term" value="P:cytoplasmic translational termination"/>
    <property type="evidence" value="ECO:0007669"/>
    <property type="project" value="TreeGrafter"/>
</dbReference>
<dbReference type="CDD" id="cd00520">
    <property type="entry name" value="RRF"/>
    <property type="match status" value="1"/>
</dbReference>
<dbReference type="FunFam" id="1.10.132.20:FF:000001">
    <property type="entry name" value="Ribosome-recycling factor"/>
    <property type="match status" value="1"/>
</dbReference>
<dbReference type="FunFam" id="3.30.1360.40:FF:000001">
    <property type="entry name" value="Ribosome-recycling factor"/>
    <property type="match status" value="1"/>
</dbReference>
<dbReference type="Gene3D" id="3.30.1360.40">
    <property type="match status" value="1"/>
</dbReference>
<dbReference type="Gene3D" id="1.10.132.20">
    <property type="entry name" value="Ribosome-recycling factor"/>
    <property type="match status" value="1"/>
</dbReference>
<dbReference type="HAMAP" id="MF_00040">
    <property type="entry name" value="RRF"/>
    <property type="match status" value="1"/>
</dbReference>
<dbReference type="InterPro" id="IPR002661">
    <property type="entry name" value="Ribosome_recyc_fac"/>
</dbReference>
<dbReference type="InterPro" id="IPR023584">
    <property type="entry name" value="Ribosome_recyc_fac_dom"/>
</dbReference>
<dbReference type="InterPro" id="IPR036191">
    <property type="entry name" value="RRF_sf"/>
</dbReference>
<dbReference type="NCBIfam" id="TIGR00496">
    <property type="entry name" value="frr"/>
    <property type="match status" value="1"/>
</dbReference>
<dbReference type="PANTHER" id="PTHR20982:SF3">
    <property type="entry name" value="MITOCHONDRIAL RIBOSOME RECYCLING FACTOR PSEUDO 1"/>
    <property type="match status" value="1"/>
</dbReference>
<dbReference type="PANTHER" id="PTHR20982">
    <property type="entry name" value="RIBOSOME RECYCLING FACTOR"/>
    <property type="match status" value="1"/>
</dbReference>
<dbReference type="Pfam" id="PF01765">
    <property type="entry name" value="RRF"/>
    <property type="match status" value="1"/>
</dbReference>
<dbReference type="SUPFAM" id="SSF55194">
    <property type="entry name" value="Ribosome recycling factor, RRF"/>
    <property type="match status" value="1"/>
</dbReference>
<name>RRF_RHOP2</name>
<keyword id="KW-0963">Cytoplasm</keyword>
<keyword id="KW-0648">Protein biosynthesis</keyword>
<keyword id="KW-1185">Reference proteome</keyword>
<sequence length="187" mass="20980">MQSEKFDINDLKRRMQGASQALQHELGGLRTGRAAASMLEPVQVDAYGTHMPLNQLATVTVPEPRLLSVQVWDKSMVRAVEKAIVDSNLGLSPATEGQVLRLRIPELNQDRRKELVKVAHKYAEAARVAVRHVRRDGLDTIKKLEKSHEISEDDQKRLDQEVQKATDSAISEIDQLLASKEKEILTV</sequence>
<comment type="function">
    <text evidence="1">Responsible for the release of ribosomes from messenger RNA at the termination of protein biosynthesis. May increase the efficiency of translation by recycling ribosomes from one round of translation to another.</text>
</comment>
<comment type="subcellular location">
    <subcellularLocation>
        <location evidence="1">Cytoplasm</location>
    </subcellularLocation>
</comment>
<comment type="similarity">
    <text evidence="1">Belongs to the RRF family.</text>
</comment>
<feature type="chain" id="PRO_0000341037" description="Ribosome-recycling factor">
    <location>
        <begin position="1"/>
        <end position="187"/>
    </location>
</feature>
<gene>
    <name evidence="1" type="primary">frr</name>
    <name type="ordered locus">RPB_2825</name>
</gene>
<organism>
    <name type="scientific">Rhodopseudomonas palustris (strain HaA2)</name>
    <dbReference type="NCBI Taxonomy" id="316058"/>
    <lineage>
        <taxon>Bacteria</taxon>
        <taxon>Pseudomonadati</taxon>
        <taxon>Pseudomonadota</taxon>
        <taxon>Alphaproteobacteria</taxon>
        <taxon>Hyphomicrobiales</taxon>
        <taxon>Nitrobacteraceae</taxon>
        <taxon>Rhodopseudomonas</taxon>
    </lineage>
</organism>
<reference key="1">
    <citation type="submission" date="2006-01" db="EMBL/GenBank/DDBJ databases">
        <title>Complete sequence of Rhodopseudomonas palustris HaA2.</title>
        <authorList>
            <consortium name="US DOE Joint Genome Institute"/>
            <person name="Copeland A."/>
            <person name="Lucas S."/>
            <person name="Lapidus A."/>
            <person name="Barry K."/>
            <person name="Detter J.C."/>
            <person name="Glavina T."/>
            <person name="Hammon N."/>
            <person name="Israni S."/>
            <person name="Pitluck S."/>
            <person name="Chain P."/>
            <person name="Malfatti S."/>
            <person name="Shin M."/>
            <person name="Vergez L."/>
            <person name="Schmutz J."/>
            <person name="Larimer F."/>
            <person name="Land M."/>
            <person name="Hauser L."/>
            <person name="Pelletier D.A."/>
            <person name="Kyrpides N."/>
            <person name="Anderson I."/>
            <person name="Oda Y."/>
            <person name="Harwood C.S."/>
            <person name="Richardson P."/>
        </authorList>
    </citation>
    <scope>NUCLEOTIDE SEQUENCE [LARGE SCALE GENOMIC DNA]</scope>
    <source>
        <strain>HaA2</strain>
    </source>
</reference>